<protein>
    <recommendedName>
        <fullName evidence="1">Pyrokinin-5</fullName>
    </recommendedName>
    <alternativeName>
        <fullName evidence="1">FXPRL-amide</fullName>
    </alternativeName>
    <alternativeName>
        <fullName evidence="4">GroPo-Capa-PK</fullName>
    </alternativeName>
</protein>
<keyword id="KW-0027">Amidation</keyword>
<keyword id="KW-0903">Direct protein sequencing</keyword>
<keyword id="KW-0527">Neuropeptide</keyword>
<keyword id="KW-0964">Secreted</keyword>
<organism>
    <name type="scientific">Gromphadorhina portentosa</name>
    <name type="common">Madagascan hissing cockroach</name>
    <dbReference type="NCBI Taxonomy" id="36953"/>
    <lineage>
        <taxon>Eukaryota</taxon>
        <taxon>Metazoa</taxon>
        <taxon>Ecdysozoa</taxon>
        <taxon>Arthropoda</taxon>
        <taxon>Hexapoda</taxon>
        <taxon>Insecta</taxon>
        <taxon>Pterygota</taxon>
        <taxon>Neoptera</taxon>
        <taxon>Polyneoptera</taxon>
        <taxon>Dictyoptera</taxon>
        <taxon>Blattodea</taxon>
        <taxon>Blaberoidea</taxon>
        <taxon>Blaberidae</taxon>
        <taxon>Oxyhaloinae</taxon>
        <taxon>Gromphadorhina</taxon>
    </lineage>
</organism>
<reference evidence="5" key="1">
    <citation type="journal article" date="2009" name="BMC Evol. Biol.">
        <title>A proteomic approach for studying insect phylogeny: CAPA peptides of ancient insect taxa (Dictyoptera, Blattoptera) as a test case.</title>
        <authorList>
            <person name="Roth S."/>
            <person name="Fromm B."/>
            <person name="Gaede G."/>
            <person name="Predel R."/>
        </authorList>
    </citation>
    <scope>PROTEIN SEQUENCE</scope>
    <scope>AMIDATION AT LEU-17</scope>
    <source>
        <tissue evidence="3">Abdominal perisympathetic organs</tissue>
    </source>
</reference>
<dbReference type="GO" id="GO:0005576">
    <property type="term" value="C:extracellular region"/>
    <property type="evidence" value="ECO:0007669"/>
    <property type="project" value="UniProtKB-SubCell"/>
</dbReference>
<dbReference type="GO" id="GO:0005184">
    <property type="term" value="F:neuropeptide hormone activity"/>
    <property type="evidence" value="ECO:0007669"/>
    <property type="project" value="InterPro"/>
</dbReference>
<dbReference type="GO" id="GO:0007218">
    <property type="term" value="P:neuropeptide signaling pathway"/>
    <property type="evidence" value="ECO:0007669"/>
    <property type="project" value="UniProtKB-KW"/>
</dbReference>
<dbReference type="InterPro" id="IPR001484">
    <property type="entry name" value="Pyrokinin_CS"/>
</dbReference>
<dbReference type="PROSITE" id="PS00539">
    <property type="entry name" value="PYROKININ"/>
    <property type="match status" value="1"/>
</dbReference>
<proteinExistence type="evidence at protein level"/>
<sequence length="17" mass="1900">FGETSGETKGMWFGPRL</sequence>
<accession>P85641</accession>
<name>PPK5_GROPO</name>
<evidence type="ECO:0000250" key="1">
    <source>
        <dbReference type="UniProtKB" id="P82617"/>
    </source>
</evidence>
<evidence type="ECO:0000255" key="2"/>
<evidence type="ECO:0000269" key="3">
    <source>
    </source>
</evidence>
<evidence type="ECO:0000303" key="4">
    <source>
    </source>
</evidence>
<evidence type="ECO:0000305" key="5"/>
<feature type="peptide" id="PRO_0000378696" description="Pyrokinin-5" evidence="3">
    <location>
        <begin position="1"/>
        <end position="17"/>
    </location>
</feature>
<feature type="modified residue" description="Leucine amide" evidence="3">
    <location>
        <position position="17"/>
    </location>
</feature>
<comment type="function">
    <text evidence="1">Myoactive.</text>
</comment>
<comment type="subcellular location">
    <subcellularLocation>
        <location evidence="5">Secreted</location>
    </subcellularLocation>
</comment>
<comment type="similarity">
    <text evidence="2">Belongs to the pyrokinin family.</text>
</comment>